<protein>
    <recommendedName>
        <fullName evidence="31">Histone H3-lysine(4) N-trimethyltransferase ATX1</fullName>
        <ecNumber evidence="12 15 17">2.1.1.354</ecNumber>
    </recommendedName>
    <alternativeName>
        <fullName evidence="30">Protein SET DOMAIN GROUP 27</fullName>
    </alternativeName>
    <alternativeName>
        <fullName evidence="33">Protein-lysine N-trimethyltransferase ATX1-SoloSET</fullName>
        <ecNumber evidence="21">2.1.1.-</ecNumber>
    </alternativeName>
    <alternativeName>
        <fullName evidence="29">Trithorax-homolog protein 1</fullName>
        <shortName evidence="29">TRX-homolog protein 1</shortName>
    </alternativeName>
</protein>
<organism>
    <name type="scientific">Arabidopsis thaliana</name>
    <name type="common">Mouse-ear cress</name>
    <dbReference type="NCBI Taxonomy" id="3702"/>
    <lineage>
        <taxon>Eukaryota</taxon>
        <taxon>Viridiplantae</taxon>
        <taxon>Streptophyta</taxon>
        <taxon>Embryophyta</taxon>
        <taxon>Tracheophyta</taxon>
        <taxon>Spermatophyta</taxon>
        <taxon>Magnoliopsida</taxon>
        <taxon>eudicotyledons</taxon>
        <taxon>Gunneridae</taxon>
        <taxon>Pentapetalae</taxon>
        <taxon>rosids</taxon>
        <taxon>malvids</taxon>
        <taxon>Brassicales</taxon>
        <taxon>Brassicaceae</taxon>
        <taxon>Camelineae</taxon>
        <taxon>Arabidopsis</taxon>
    </lineage>
</organism>
<dbReference type="EC" id="2.1.1.354" evidence="12 15 17"/>
<dbReference type="EC" id="2.1.1.-" evidence="21"/>
<dbReference type="EMBL" id="AF329273">
    <property type="protein sequence ID" value="AAK01237.1"/>
    <property type="molecule type" value="mRNA"/>
</dbReference>
<dbReference type="EMBL" id="AC007071">
    <property type="protein sequence ID" value="AAD24842.1"/>
    <property type="status" value="ALT_SEQ"/>
    <property type="molecule type" value="Genomic_DNA"/>
</dbReference>
<dbReference type="EMBL" id="CP002685">
    <property type="protein sequence ID" value="AEC08569.1"/>
    <property type="molecule type" value="Genomic_DNA"/>
</dbReference>
<dbReference type="EMBL" id="BT002941">
    <property type="protein sequence ID" value="AAO22754.1"/>
    <property type="molecule type" value="mRNA"/>
</dbReference>
<dbReference type="PIR" id="D84723">
    <property type="entry name" value="D84723"/>
</dbReference>
<dbReference type="RefSeq" id="NP_850170.1">
    <molecule id="Q9C5X4-1"/>
    <property type="nucleotide sequence ID" value="NM_179839.3"/>
</dbReference>
<dbReference type="SMR" id="Q9C5X4"/>
<dbReference type="BioGRID" id="3068">
    <property type="interactions" value="6"/>
</dbReference>
<dbReference type="FunCoup" id="Q9C5X4">
    <property type="interactions" value="381"/>
</dbReference>
<dbReference type="STRING" id="3702.Q9C5X4"/>
<dbReference type="GlyCosmos" id="Q9C5X4">
    <property type="glycosylation" value="1 site, No reported glycans"/>
</dbReference>
<dbReference type="GlyGen" id="Q9C5X4">
    <property type="glycosylation" value="2 sites, 1 O-linked glycan (1 site)"/>
</dbReference>
<dbReference type="iPTMnet" id="Q9C5X4"/>
<dbReference type="PaxDb" id="3702-AT2G31650.1"/>
<dbReference type="ProteomicsDB" id="241094">
    <molecule id="Q9C5X4-1"/>
</dbReference>
<dbReference type="EnsemblPlants" id="AT2G31650.1">
    <molecule id="Q9C5X4-1"/>
    <property type="protein sequence ID" value="AT2G31650.1"/>
    <property type="gene ID" value="AT2G31650"/>
</dbReference>
<dbReference type="GeneID" id="817721"/>
<dbReference type="Gramene" id="AT2G31650.1">
    <molecule id="Q9C5X4-1"/>
    <property type="protein sequence ID" value="AT2G31650.1"/>
    <property type="gene ID" value="AT2G31650"/>
</dbReference>
<dbReference type="KEGG" id="ath:AT2G31650"/>
<dbReference type="Araport" id="AT2G31650"/>
<dbReference type="TAIR" id="AT2G31650">
    <property type="gene designation" value="ATX1"/>
</dbReference>
<dbReference type="eggNOG" id="KOG1080">
    <property type="taxonomic scope" value="Eukaryota"/>
</dbReference>
<dbReference type="HOGENOM" id="CLU_005729_0_0_1"/>
<dbReference type="InParanoid" id="Q9C5X4"/>
<dbReference type="OMA" id="PERMSQL"/>
<dbReference type="PhylomeDB" id="Q9C5X4"/>
<dbReference type="PRO" id="PR:Q9C5X4"/>
<dbReference type="Proteomes" id="UP000006548">
    <property type="component" value="Chromosome 2"/>
</dbReference>
<dbReference type="ExpressionAtlas" id="Q9C5X4">
    <property type="expression patterns" value="baseline and differential"/>
</dbReference>
<dbReference type="GO" id="GO:0000785">
    <property type="term" value="C:chromatin"/>
    <property type="evidence" value="ECO:0000314"/>
    <property type="project" value="TAIR"/>
</dbReference>
<dbReference type="GO" id="GO:0005737">
    <property type="term" value="C:cytoplasm"/>
    <property type="evidence" value="ECO:0000314"/>
    <property type="project" value="TAIR"/>
</dbReference>
<dbReference type="GO" id="GO:0005634">
    <property type="term" value="C:nucleus"/>
    <property type="evidence" value="ECO:0000314"/>
    <property type="project" value="UniProtKB"/>
</dbReference>
<dbReference type="GO" id="GO:0048471">
    <property type="term" value="C:perinuclear region of cytoplasm"/>
    <property type="evidence" value="ECO:0000314"/>
    <property type="project" value="UniProtKB"/>
</dbReference>
<dbReference type="GO" id="GO:0005886">
    <property type="term" value="C:plasma membrane"/>
    <property type="evidence" value="ECO:0000314"/>
    <property type="project" value="TAIR"/>
</dbReference>
<dbReference type="GO" id="GO:0048188">
    <property type="term" value="C:Set1C/COMPASS complex"/>
    <property type="evidence" value="ECO:0000314"/>
    <property type="project" value="TAIR"/>
</dbReference>
<dbReference type="GO" id="GO:0003682">
    <property type="term" value="F:chromatin binding"/>
    <property type="evidence" value="ECO:0000314"/>
    <property type="project" value="UniProtKB"/>
</dbReference>
<dbReference type="GO" id="GO:0140999">
    <property type="term" value="F:histone H3K4 trimethyltransferase activity"/>
    <property type="evidence" value="ECO:0000315"/>
    <property type="project" value="UniProtKB"/>
</dbReference>
<dbReference type="GO" id="GO:0010314">
    <property type="term" value="F:phosphatidylinositol-5-phosphate binding"/>
    <property type="evidence" value="ECO:0000314"/>
    <property type="project" value="TAIR"/>
</dbReference>
<dbReference type="GO" id="GO:0008276">
    <property type="term" value="F:protein methyltransferase activity"/>
    <property type="evidence" value="ECO:0000315"/>
    <property type="project" value="UniProtKB"/>
</dbReference>
<dbReference type="GO" id="GO:0000976">
    <property type="term" value="F:transcription cis-regulatory region binding"/>
    <property type="evidence" value="ECO:0000314"/>
    <property type="project" value="TAIR"/>
</dbReference>
<dbReference type="GO" id="GO:0008270">
    <property type="term" value="F:zinc ion binding"/>
    <property type="evidence" value="ECO:0007669"/>
    <property type="project" value="UniProtKB-KW"/>
</dbReference>
<dbReference type="GO" id="GO:0009738">
    <property type="term" value="P:abscisic acid-activated signaling pathway"/>
    <property type="evidence" value="ECO:0000315"/>
    <property type="project" value="UniProtKB"/>
</dbReference>
<dbReference type="GO" id="GO:0030036">
    <property type="term" value="P:actin cytoskeleton organization"/>
    <property type="evidence" value="ECO:0000315"/>
    <property type="project" value="UniProtKB"/>
</dbReference>
<dbReference type="GO" id="GO:0006338">
    <property type="term" value="P:chromatin remodeling"/>
    <property type="evidence" value="ECO:0000315"/>
    <property type="project" value="UniProtKB"/>
</dbReference>
<dbReference type="GO" id="GO:0040029">
    <property type="term" value="P:epigenetic regulation of gene expression"/>
    <property type="evidence" value="ECO:0000314"/>
    <property type="project" value="UniProtKB"/>
</dbReference>
<dbReference type="GO" id="GO:0032259">
    <property type="term" value="P:methylation"/>
    <property type="evidence" value="ECO:0007669"/>
    <property type="project" value="UniProtKB-KW"/>
</dbReference>
<dbReference type="GO" id="GO:0009910">
    <property type="term" value="P:negative regulation of flower development"/>
    <property type="evidence" value="ECO:0000315"/>
    <property type="project" value="UniProtKB"/>
</dbReference>
<dbReference type="GO" id="GO:0018022">
    <property type="term" value="P:peptidyl-lysine methylation"/>
    <property type="evidence" value="ECO:0000315"/>
    <property type="project" value="UniProtKB"/>
</dbReference>
<dbReference type="GO" id="GO:1904961">
    <property type="term" value="P:quiescent center organization"/>
    <property type="evidence" value="ECO:0000315"/>
    <property type="project" value="UniProtKB"/>
</dbReference>
<dbReference type="GO" id="GO:0006355">
    <property type="term" value="P:regulation of DNA-templated transcription"/>
    <property type="evidence" value="ECO:0000315"/>
    <property type="project" value="TAIR"/>
</dbReference>
<dbReference type="GO" id="GO:0009909">
    <property type="term" value="P:regulation of flower development"/>
    <property type="evidence" value="ECO:0000315"/>
    <property type="project" value="UniProtKB"/>
</dbReference>
<dbReference type="GO" id="GO:2000023">
    <property type="term" value="P:regulation of lateral root development"/>
    <property type="evidence" value="ECO:0000315"/>
    <property type="project" value="UniProtKB"/>
</dbReference>
<dbReference type="GO" id="GO:2000280">
    <property type="term" value="P:regulation of root development"/>
    <property type="evidence" value="ECO:0000315"/>
    <property type="project" value="UniProtKB"/>
</dbReference>
<dbReference type="GO" id="GO:2000067">
    <property type="term" value="P:regulation of root morphogenesis"/>
    <property type="evidence" value="ECO:0000315"/>
    <property type="project" value="UniProtKB"/>
</dbReference>
<dbReference type="GO" id="GO:0090333">
    <property type="term" value="P:regulation of stomatal closure"/>
    <property type="evidence" value="ECO:0000315"/>
    <property type="project" value="UniProtKB"/>
</dbReference>
<dbReference type="GO" id="GO:0006357">
    <property type="term" value="P:regulation of transcription by RNA polymerase II"/>
    <property type="evidence" value="ECO:0000314"/>
    <property type="project" value="UniProtKB"/>
</dbReference>
<dbReference type="GO" id="GO:0009414">
    <property type="term" value="P:response to water deprivation"/>
    <property type="evidence" value="ECO:0000315"/>
    <property type="project" value="UniProtKB"/>
</dbReference>
<dbReference type="GO" id="GO:0010093">
    <property type="term" value="P:specification of floral organ identity"/>
    <property type="evidence" value="ECO:0000315"/>
    <property type="project" value="TAIR"/>
</dbReference>
<dbReference type="GO" id="GO:0010228">
    <property type="term" value="P:vegetative to reproductive phase transition of meristem"/>
    <property type="evidence" value="ECO:0000315"/>
    <property type="project" value="UniProtKB"/>
</dbReference>
<dbReference type="CDD" id="cd15662">
    <property type="entry name" value="ePHD_ATX1_2_like"/>
    <property type="match status" value="1"/>
</dbReference>
<dbReference type="CDD" id="cd15494">
    <property type="entry name" value="PHD_ATX1_2_like"/>
    <property type="match status" value="1"/>
</dbReference>
<dbReference type="CDD" id="cd20142">
    <property type="entry name" value="PWWP_AtATX1-like"/>
    <property type="match status" value="1"/>
</dbReference>
<dbReference type="CDD" id="cd10518">
    <property type="entry name" value="SET_SETD1-like"/>
    <property type="match status" value="1"/>
</dbReference>
<dbReference type="CDD" id="cd20404">
    <property type="entry name" value="Tudor_Agenet_AtEML-like"/>
    <property type="match status" value="1"/>
</dbReference>
<dbReference type="FunFam" id="2.170.270.10:FF:000040">
    <property type="entry name" value="Histone-lysine N-methyltransferase"/>
    <property type="match status" value="1"/>
</dbReference>
<dbReference type="FunFam" id="3.30.40.10:FF:000293">
    <property type="entry name" value="Histone-lysine N-methyltransferase"/>
    <property type="match status" value="1"/>
</dbReference>
<dbReference type="FunFam" id="3.30.40.10:FF:000299">
    <property type="entry name" value="Histone-lysine N-methyltransferase"/>
    <property type="match status" value="1"/>
</dbReference>
<dbReference type="Gene3D" id="2.30.30.140">
    <property type="match status" value="2"/>
</dbReference>
<dbReference type="Gene3D" id="3.30.160.360">
    <property type="match status" value="1"/>
</dbReference>
<dbReference type="Gene3D" id="2.170.270.10">
    <property type="entry name" value="SET domain"/>
    <property type="match status" value="1"/>
</dbReference>
<dbReference type="Gene3D" id="3.30.40.10">
    <property type="entry name" value="Zinc/RING finger domain, C3HC4 (zinc finger)"/>
    <property type="match status" value="2"/>
</dbReference>
<dbReference type="InterPro" id="IPR041956">
    <property type="entry name" value="ATX1/2_ePHD"/>
</dbReference>
<dbReference type="InterPro" id="IPR042010">
    <property type="entry name" value="ATX1/2_PHD"/>
</dbReference>
<dbReference type="InterPro" id="IPR034732">
    <property type="entry name" value="EPHD"/>
</dbReference>
<dbReference type="InterPro" id="IPR003889">
    <property type="entry name" value="FYrich_C"/>
</dbReference>
<dbReference type="InterPro" id="IPR003888">
    <property type="entry name" value="FYrich_N"/>
</dbReference>
<dbReference type="InterPro" id="IPR050701">
    <property type="entry name" value="Histone_Mod_Regulator"/>
</dbReference>
<dbReference type="InterPro" id="IPR002219">
    <property type="entry name" value="PE/DAG-bd"/>
</dbReference>
<dbReference type="InterPro" id="IPR003616">
    <property type="entry name" value="Post-SET_dom"/>
</dbReference>
<dbReference type="InterPro" id="IPR000313">
    <property type="entry name" value="PWWP_dom"/>
</dbReference>
<dbReference type="InterPro" id="IPR001214">
    <property type="entry name" value="SET_dom"/>
</dbReference>
<dbReference type="InterPro" id="IPR046341">
    <property type="entry name" value="SET_dom_sf"/>
</dbReference>
<dbReference type="InterPro" id="IPR019786">
    <property type="entry name" value="Zinc_finger_PHD-type_CS"/>
</dbReference>
<dbReference type="InterPro" id="IPR011011">
    <property type="entry name" value="Znf_FYVE_PHD"/>
</dbReference>
<dbReference type="InterPro" id="IPR001965">
    <property type="entry name" value="Znf_PHD"/>
</dbReference>
<dbReference type="InterPro" id="IPR019787">
    <property type="entry name" value="Znf_PHD-finger"/>
</dbReference>
<dbReference type="InterPro" id="IPR013083">
    <property type="entry name" value="Znf_RING/FYVE/PHD"/>
</dbReference>
<dbReference type="PANTHER" id="PTHR13793:SF153">
    <property type="entry name" value="HISTONE H3-LYSINE(4) N-TRIMETHYLTRANSFERASE ATX1"/>
    <property type="match status" value="1"/>
</dbReference>
<dbReference type="PANTHER" id="PTHR13793">
    <property type="entry name" value="PHD FINGER PROTEINS"/>
    <property type="match status" value="1"/>
</dbReference>
<dbReference type="Pfam" id="PF05965">
    <property type="entry name" value="FYRC"/>
    <property type="match status" value="1"/>
</dbReference>
<dbReference type="Pfam" id="PF05964">
    <property type="entry name" value="FYRN"/>
    <property type="match status" value="1"/>
</dbReference>
<dbReference type="Pfam" id="PF13831">
    <property type="entry name" value="PHD_2"/>
    <property type="match status" value="1"/>
</dbReference>
<dbReference type="Pfam" id="PF00855">
    <property type="entry name" value="PWWP"/>
    <property type="match status" value="1"/>
</dbReference>
<dbReference type="Pfam" id="PF00856">
    <property type="entry name" value="SET"/>
    <property type="match status" value="1"/>
</dbReference>
<dbReference type="Pfam" id="PF13832">
    <property type="entry name" value="zf-HC5HC2H_2"/>
    <property type="match status" value="1"/>
</dbReference>
<dbReference type="SMART" id="SM00542">
    <property type="entry name" value="FYRC"/>
    <property type="match status" value="1"/>
</dbReference>
<dbReference type="SMART" id="SM00541">
    <property type="entry name" value="FYRN"/>
    <property type="match status" value="1"/>
</dbReference>
<dbReference type="SMART" id="SM00249">
    <property type="entry name" value="PHD"/>
    <property type="match status" value="2"/>
</dbReference>
<dbReference type="SMART" id="SM00293">
    <property type="entry name" value="PWWP"/>
    <property type="match status" value="1"/>
</dbReference>
<dbReference type="SMART" id="SM00317">
    <property type="entry name" value="SET"/>
    <property type="match status" value="1"/>
</dbReference>
<dbReference type="SUPFAM" id="SSF57903">
    <property type="entry name" value="FYVE/PHD zinc finger"/>
    <property type="match status" value="1"/>
</dbReference>
<dbReference type="SUPFAM" id="SSF82199">
    <property type="entry name" value="SET domain"/>
    <property type="match status" value="1"/>
</dbReference>
<dbReference type="SUPFAM" id="SSF63748">
    <property type="entry name" value="Tudor/PWWP/MBT"/>
    <property type="match status" value="2"/>
</dbReference>
<dbReference type="PROSITE" id="PS51805">
    <property type="entry name" value="EPHD"/>
    <property type="match status" value="1"/>
</dbReference>
<dbReference type="PROSITE" id="PS51543">
    <property type="entry name" value="FYRC"/>
    <property type="match status" value="1"/>
</dbReference>
<dbReference type="PROSITE" id="PS51542">
    <property type="entry name" value="FYRN"/>
    <property type="match status" value="1"/>
</dbReference>
<dbReference type="PROSITE" id="PS50868">
    <property type="entry name" value="POST_SET"/>
    <property type="match status" value="1"/>
</dbReference>
<dbReference type="PROSITE" id="PS50812">
    <property type="entry name" value="PWWP"/>
    <property type="match status" value="1"/>
</dbReference>
<dbReference type="PROSITE" id="PS50280">
    <property type="entry name" value="SET"/>
    <property type="match status" value="1"/>
</dbReference>
<dbReference type="PROSITE" id="PS50081">
    <property type="entry name" value="ZF_DAG_PE_2"/>
    <property type="match status" value="1"/>
</dbReference>
<dbReference type="PROSITE" id="PS01359">
    <property type="entry name" value="ZF_PHD_1"/>
    <property type="match status" value="1"/>
</dbReference>
<dbReference type="PROSITE" id="PS50016">
    <property type="entry name" value="ZF_PHD_2"/>
    <property type="match status" value="1"/>
</dbReference>
<keyword id="KW-0938">Abscisic acid signaling pathway</keyword>
<keyword id="KW-0025">Alternative splicing</keyword>
<keyword id="KW-0156">Chromatin regulator</keyword>
<keyword id="KW-0963">Cytoplasm</keyword>
<keyword id="KW-0903">Direct protein sequencing</keyword>
<keyword id="KW-0325">Glycoprotein</keyword>
<keyword id="KW-0479">Metal-binding</keyword>
<keyword id="KW-0489">Methyltransferase</keyword>
<keyword id="KW-0539">Nucleus</keyword>
<keyword id="KW-1185">Reference proteome</keyword>
<keyword id="KW-0677">Repeat</keyword>
<keyword id="KW-0949">S-adenosyl-L-methionine</keyword>
<keyword id="KW-0346">Stress response</keyword>
<keyword id="KW-0804">Transcription</keyword>
<keyword id="KW-0805">Transcription regulation</keyword>
<keyword id="KW-0808">Transferase</keyword>
<keyword id="KW-0862">Zinc</keyword>
<keyword id="KW-0863">Zinc-finger</keyword>
<proteinExistence type="evidence at protein level"/>
<evidence type="ECO:0000250" key="1">
    <source>
        <dbReference type="UniProtKB" id="Q03164"/>
    </source>
</evidence>
<evidence type="ECO:0000255" key="2">
    <source>
        <dbReference type="PROSITE-ProRule" id="PRU00146"/>
    </source>
</evidence>
<evidence type="ECO:0000255" key="3">
    <source>
        <dbReference type="PROSITE-ProRule" id="PRU00155"/>
    </source>
</evidence>
<evidence type="ECO:0000255" key="4">
    <source>
        <dbReference type="PROSITE-ProRule" id="PRU00162"/>
    </source>
</evidence>
<evidence type="ECO:0000255" key="5">
    <source>
        <dbReference type="PROSITE-ProRule" id="PRU00190"/>
    </source>
</evidence>
<evidence type="ECO:0000255" key="6">
    <source>
        <dbReference type="PROSITE-ProRule" id="PRU00226"/>
    </source>
</evidence>
<evidence type="ECO:0000255" key="7">
    <source>
        <dbReference type="PROSITE-ProRule" id="PRU00875"/>
    </source>
</evidence>
<evidence type="ECO:0000255" key="8">
    <source>
        <dbReference type="PROSITE-ProRule" id="PRU00876"/>
    </source>
</evidence>
<evidence type="ECO:0000255" key="9">
    <source>
        <dbReference type="PROSITE-ProRule" id="PRU01146"/>
    </source>
</evidence>
<evidence type="ECO:0000256" key="10">
    <source>
        <dbReference type="SAM" id="MobiDB-lite"/>
    </source>
</evidence>
<evidence type="ECO:0000269" key="11">
    <source>
    </source>
</evidence>
<evidence type="ECO:0000269" key="12">
    <source>
    </source>
</evidence>
<evidence type="ECO:0000269" key="13">
    <source>
    </source>
</evidence>
<evidence type="ECO:0000269" key="14">
    <source>
    </source>
</evidence>
<evidence type="ECO:0000269" key="15">
    <source>
    </source>
</evidence>
<evidence type="ECO:0000269" key="16">
    <source>
    </source>
</evidence>
<evidence type="ECO:0000269" key="17">
    <source>
    </source>
</evidence>
<evidence type="ECO:0000269" key="18">
    <source>
    </source>
</evidence>
<evidence type="ECO:0000269" key="19">
    <source>
    </source>
</evidence>
<evidence type="ECO:0000269" key="20">
    <source>
    </source>
</evidence>
<evidence type="ECO:0000269" key="21">
    <source>
    </source>
</evidence>
<evidence type="ECO:0000269" key="22">
    <source>
    </source>
</evidence>
<evidence type="ECO:0000269" key="23">
    <source>
    </source>
</evidence>
<evidence type="ECO:0000269" key="24">
    <source>
    </source>
</evidence>
<evidence type="ECO:0000269" key="25">
    <source>
    </source>
</evidence>
<evidence type="ECO:0000269" key="26">
    <source>
    </source>
</evidence>
<evidence type="ECO:0000269" key="27">
    <source>
    </source>
</evidence>
<evidence type="ECO:0000269" key="28">
    <source>
    </source>
</evidence>
<evidence type="ECO:0000303" key="29">
    <source>
    </source>
</evidence>
<evidence type="ECO:0000303" key="30">
    <source>
    </source>
</evidence>
<evidence type="ECO:0000303" key="31">
    <source>
    </source>
</evidence>
<evidence type="ECO:0000303" key="32">
    <source>
    </source>
</evidence>
<evidence type="ECO:0000303" key="33">
    <source>
    </source>
</evidence>
<evidence type="ECO:0000305" key="34"/>
<evidence type="ECO:0000312" key="35">
    <source>
        <dbReference type="Araport" id="AT2G31650"/>
    </source>
</evidence>
<evidence type="ECO:0000312" key="36">
    <source>
        <dbReference type="EMBL" id="AAD24842.1"/>
    </source>
</evidence>
<feature type="chain" id="PRO_0000233354" description="Histone H3-lysine(4) N-trimethyltransferase ATX1">
    <location>
        <begin position="1"/>
        <end position="1062"/>
    </location>
</feature>
<feature type="domain" description="PWWP" evidence="4">
    <location>
        <begin position="301"/>
        <end position="365"/>
    </location>
</feature>
<feature type="domain" description="FYR N-terminal" evidence="7">
    <location>
        <begin position="441"/>
        <end position="500"/>
    </location>
</feature>
<feature type="domain" description="FYR C-terminal" evidence="8">
    <location>
        <begin position="504"/>
        <end position="586"/>
    </location>
</feature>
<feature type="domain" description="SET" evidence="5">
    <location>
        <begin position="898"/>
        <end position="1016"/>
    </location>
</feature>
<feature type="domain" description="Post-SET" evidence="3">
    <location>
        <begin position="1022"/>
        <end position="1038"/>
    </location>
</feature>
<feature type="zinc finger region" description="Phorbol-ester/DAG-type" evidence="6">
    <location>
        <begin position="591"/>
        <end position="647"/>
    </location>
</feature>
<feature type="zinc finger region" description="PHD-type 1" evidence="2">
    <location>
        <begin position="609"/>
        <end position="660"/>
    </location>
</feature>
<feature type="zinc finger region" description="C2HC pre-PHD-type" evidence="9">
    <location>
        <begin position="665"/>
        <end position="698"/>
    </location>
</feature>
<feature type="zinc finger region" description="PHD-type 2" evidence="9">
    <location>
        <begin position="722"/>
        <end position="785"/>
    </location>
</feature>
<feature type="region of interest" description="Disordered" evidence="10">
    <location>
        <begin position="159"/>
        <end position="184"/>
    </location>
</feature>
<feature type="region of interest" description="Disordered" evidence="10">
    <location>
        <begin position="401"/>
        <end position="424"/>
    </location>
</feature>
<feature type="region of interest" description="Interaction with PIP5" evidence="13">
    <location>
        <begin position="599"/>
        <end position="1062"/>
    </location>
</feature>
<feature type="binding site" evidence="5">
    <location>
        <position position="908"/>
    </location>
    <ligand>
        <name>S-adenosyl-L-methionine</name>
        <dbReference type="ChEBI" id="CHEBI:59789"/>
    </ligand>
</feature>
<feature type="binding site" evidence="5">
    <location>
        <position position="954"/>
    </location>
    <ligand>
        <name>S-adenosyl-L-methionine</name>
        <dbReference type="ChEBI" id="CHEBI:59789"/>
    </ligand>
</feature>
<feature type="binding site" evidence="1">
    <location>
        <begin position="977"/>
        <end position="978"/>
    </location>
    <ligand>
        <name>S-adenosyl-L-methionine</name>
        <dbReference type="ChEBI" id="CHEBI:59789"/>
    </ligand>
</feature>
<feature type="binding site" evidence="1">
    <location>
        <position position="980"/>
    </location>
    <ligand>
        <name>Zn(2+)</name>
        <dbReference type="ChEBI" id="CHEBI:29105"/>
    </ligand>
</feature>
<feature type="binding site" evidence="1">
    <location>
        <position position="1026"/>
    </location>
    <ligand>
        <name>Zn(2+)</name>
        <dbReference type="ChEBI" id="CHEBI:29105"/>
    </ligand>
</feature>
<feature type="binding site" evidence="1">
    <location>
        <position position="1028"/>
    </location>
    <ligand>
        <name>Zn(2+)</name>
        <dbReference type="ChEBI" id="CHEBI:29105"/>
    </ligand>
</feature>
<feature type="binding site" evidence="1">
    <location>
        <position position="1033"/>
    </location>
    <ligand>
        <name>Zn(2+)</name>
        <dbReference type="ChEBI" id="CHEBI:29105"/>
    </ligand>
</feature>
<feature type="glycosylation site" description="O-linked (GlcNAc) serine" evidence="28">
    <location>
        <position position="947"/>
    </location>
</feature>
<feature type="splice variant" id="VSP_060526" description="In isoform 3." evidence="33">
    <location>
        <begin position="1"/>
        <end position="875"/>
    </location>
</feature>
<feature type="splice variant" id="VSP_018132" description="In isoform 2." evidence="32">
    <location>
        <begin position="1"/>
        <end position="583"/>
    </location>
</feature>
<feature type="mutagenesis site" description="Deficient methyltransferase catalytic activity associated with early-flowering phenotype and reduced WRKY 70 and LTP7 transcripts levels but normal recruitment of WDR5A at target genes but without histone modification; when associated with A-945, A-954, A-1013 and A-1015." evidence="24">
    <original>Y</original>
    <variation>A</variation>
    <location>
        <position position="927"/>
    </location>
</feature>
<feature type="mutagenesis site" description="Deficient methyltransferase catalytic activity associated with early-flowering phenotype and reduced WRKY 70 and LTP7 transcripts levels but normal recruitment of WDR5A at target genes but without histone modification; when associated with A-927, A-954, A-1013 and A-1015." evidence="24">
    <original>Y</original>
    <variation>A</variation>
    <location>
        <position position="945"/>
    </location>
</feature>
<feature type="mutagenesis site" description="Repressed FLC transcription activation associated with reduced activation by SEC-mediated O-GlcNAcylation and lower methyltransferase catalytic activity." evidence="28">
    <original>S</original>
    <variation>A</variation>
    <location>
        <position position="947"/>
    </location>
</feature>
<feature type="mutagenesis site" description="Deficient methyltransferase catalytic activity associated with early-flowering phenotype and reduced WRKY 70 and LTP7 transcripts levels but normal recruitment of WDR5A at target genes but without histone modification; when associated with A-927, A-945, A-1013 and A-1015." evidence="24">
    <original>Y</original>
    <variation>A</variation>
    <location>
        <position position="954"/>
    </location>
</feature>
<feature type="mutagenesis site" description="Deficient methyltransferase catalytic activity associated with early-flowering phenotype and reduced WRKY 70 and LTP7 transcripts levels but normal recruitment of WDR5A at target genes but without histone modification; when associated with A-927, A-945, A-954 and A-1015." evidence="24">
    <original>Y</original>
    <variation>A</variation>
    <location>
        <position position="1013"/>
    </location>
</feature>
<feature type="mutagenesis site" description="Deficient methyltransferase catalytic activity associated with early-flowering phenotype and reduced WRKY 70 and LTP7 transcripts levels but normal recruitment of WDR5A at target genes but without histone modification; when associated with A-927, A-945, A-954 and A-1013." evidence="24">
    <original>Y</original>
    <variation>A</variation>
    <location>
        <position position="1015"/>
    </location>
</feature>
<feature type="sequence conflict" description="In Ref. 1; AAK01237." evidence="34" ref="1">
    <original>F</original>
    <variation>V</variation>
    <location>
        <position position="4"/>
    </location>
</feature>
<feature type="sequence conflict" description="In Ref. 1; AAK01237." evidence="34" ref="1">
    <original>R</original>
    <variation>H</variation>
    <location>
        <position position="23"/>
    </location>
</feature>
<feature type="sequence conflict" description="In Ref. 1; AAK01237." evidence="34" ref="1">
    <original>V</original>
    <variation>I</variation>
    <location>
        <position position="194"/>
    </location>
</feature>
<feature type="sequence conflict" description="In Ref. 1; AAK01237." evidence="34" ref="1">
    <original>A</original>
    <variation>S</variation>
    <location>
        <position position="313"/>
    </location>
</feature>
<feature type="sequence conflict" description="In Ref. 1; AAK01237." evidence="34" ref="1">
    <original>R</original>
    <variation>Q</variation>
    <location>
        <position position="667"/>
    </location>
</feature>
<gene>
    <name evidence="31" type="primary">ATX1</name>
    <name evidence="30" type="synonym">SDG27</name>
    <name evidence="30" type="synonym">SET27</name>
    <name evidence="29" type="synonym">TRX1</name>
    <name evidence="35" type="ordered locus">At2g31650</name>
    <name evidence="36" type="ORF">T9H9.17</name>
</gene>
<accession>Q9C5X4</accession>
<accession>Q84WP4</accession>
<accession>Q9SIP3</accession>
<comment type="function">
    <molecule>Isoform 1</molecule>
    <text evidence="12 13 14 15 16 17 18 20 22 23 24 26 27 28">Binds to the promoter and regulates the transcription of target genes, maintaining them in an active state; at promoters, required for TATA binding proteins (TBPs, e.g. TBP1 and TBP2) and RNA polymerase II (Pol II) recruitment, and, in a subsequent event, is recruited by a phosphorylated form of Pol II to the +300-bp region of transcribed sequences to trimethylates nucleosomes (PubMed:21266657, PubMed:23284292). Histone trimethyltransferase that trimethylates 'Lys-4' of histone H3 (H3K4me3); H3 'Lys-4' methylation represents a specific tag for epigenetic transcriptional activation and is required for efficient elongation of transcription but not for transcription initiation (PubMed:17881378, PubMed:17965588, PubMed:18375658, PubMed:23284292). Methylates only a limited fraction of nucleosomes of target genes (e.g. FLC, NAP, XTH33 and WRKY70) (PubMed:18375658). Necessary for WDR5A occupancy at WRKY70 and LTP7 genes (PubMed:23284292). Required to maintain the active state of class A (AP1 and AP2), class B (PI and AP3) and class C (AG, AGAMOUS) floral homeotic genes at early stages of flower development (PubMed:17881378). Together with CLF, modulates AG nucleosome methylation statement (PubMed:17881378). Involved in epigenetic regulation (e.g. H3K4me3) of the floral repressors FLC, FT and SOC1 to prevent the transition from vegetative to reproductive development, independently of the photoperiod; binds the active FLC locus before flowering, but this interaction is released upon the transition to flowering (PubMed:18375656, PubMed:24102415, PubMed:30150325). Regulates floral organ identity and flowering transition. Functions as a receptor for the lipid messenger phosphatidylinositol 5-phosphate (PI5P), which negatively regulates its transcriptional activation activity. Exhibits histone methylase activity and subsequent transcriptional regulation on WRKY70 gene, and, to a lower extent on secondary defense-response targets salicylic acid (SA)-responsive gene PR1 and jasmonic acid (JA)-responsive gene THI2.1 (PubMed:17965588). Involved in response to dehydration stress-response in both abscisic acid (ABA)-dependent and ABA-independent pathways; this includes specific genes (e.g. COR15A, ADH1, CBF4, RD29A, RD29B, RD26, ABF3, NCED3 and ABA3) epigenetic regulation (e.g. H3K4me3 and Pol II recruitment) to promote their transcription and influence ABA production (PubMed:19901554, PubMed:21309869). Implicated in stomatal closure regulation (PubMed:21309869). Indirect repressor of XTH genes (XTH33) (PubMed:19154201). Necessary for the phosphorylation of Pol II NRPB1 (e.g. Ser5P and Ser2P) at the promoters of target genes, thus regulating both early and late stages of transcription (PubMed:21266657). Controls root growth and architecture by regulating the timing of root development, stem cell niche maintenance (e.g. quiescent center (QC)), and cell patterning during primary and lateral root development (PubMed:25205583). Modulates cell cycle duration, cell production, and the transition from cell proliferation in the root apical meristem (RAM) to cell elongation (PubMed:25205583).</text>
</comment>
<comment type="function">
    <molecule>Isoform 3</molecule>
    <text evidence="21">Trimethylates A4/EF1A post-translationally at Lys-396 (PubMed:21245040). Required for actin cytoskeleton organization (PubMed:21245040).</text>
</comment>
<comment type="catalytic activity">
    <molecule>Isoform 1</molecule>
    <reaction evidence="12 15 17">
        <text>L-lysyl(4)-[histone H3] + 3 S-adenosyl-L-methionine = N(6),N(6),N(6)-trimethyl-L-lysyl(4)-[histone H3] + 3 S-adenosyl-L-homocysteine + 3 H(+)</text>
        <dbReference type="Rhea" id="RHEA:60260"/>
        <dbReference type="Rhea" id="RHEA-COMP:15537"/>
        <dbReference type="Rhea" id="RHEA-COMP:15547"/>
        <dbReference type="ChEBI" id="CHEBI:15378"/>
        <dbReference type="ChEBI" id="CHEBI:29969"/>
        <dbReference type="ChEBI" id="CHEBI:57856"/>
        <dbReference type="ChEBI" id="CHEBI:59789"/>
        <dbReference type="ChEBI" id="CHEBI:61961"/>
        <dbReference type="EC" id="2.1.1.354"/>
    </reaction>
    <physiologicalReaction direction="left-to-right" evidence="12 15 17">
        <dbReference type="Rhea" id="RHEA:60261"/>
    </physiologicalReaction>
</comment>
<comment type="catalytic activity">
    <molecule>Isoform 3</molecule>
    <reaction evidence="21">
        <text>L-lysyl-[protein] + 3 S-adenosyl-L-methionine = N(6),N(6),N(6)-trimethyl-L-lysyl-[protein] + 3 S-adenosyl-L-homocysteine + 3 H(+)</text>
        <dbReference type="Rhea" id="RHEA:54192"/>
        <dbReference type="Rhea" id="RHEA-COMP:9752"/>
        <dbReference type="Rhea" id="RHEA-COMP:13826"/>
        <dbReference type="ChEBI" id="CHEBI:15378"/>
        <dbReference type="ChEBI" id="CHEBI:29969"/>
        <dbReference type="ChEBI" id="CHEBI:57856"/>
        <dbReference type="ChEBI" id="CHEBI:59789"/>
        <dbReference type="ChEBI" id="CHEBI:61961"/>
    </reaction>
    <physiologicalReaction direction="left-to-right" evidence="21">
        <dbReference type="Rhea" id="RHEA:54193"/>
    </physiologicalReaction>
</comment>
<comment type="subunit">
    <molecule>Isoform 1</molecule>
    <text evidence="13 14 19 22 24 25 28">Interacts with PIP5 (PubMed:16585509). Interacts with WDR5A (PubMed:19567704, PubMed:23284292). Binds to CLF in the nucleus (PubMed:17881378). Interacts with NRPB1 CTD domain, especially when NRPB1 is phosphorylated on 'Ser-5' of the heptapeptide repeat (PubMed:21266657). Component of a nuclear protein complex containing at least TATA binding proteins (TBPs, e.g. TBP1 and TBP2) and ATX1 (PubMed:21266657). Associates with ULT1 for trimethylating 'Lys-4' on histone H3 (H3K4me3) at flower MADS box gene loci (PubMed:23632855). Interacts with SEC (PubMed:30150325).</text>
</comment>
<comment type="subunit">
    <molecule>Isoform 3</molecule>
    <text evidence="21">Interacts with A4/EF1A in the cytoplasm on the nuclear periphery.</text>
</comment>
<comment type="subcellular location">
    <molecule>Isoform 1</molecule>
    <subcellularLocation>
        <location evidence="13 14">Nucleus</location>
    </subcellularLocation>
    <subcellularLocation>
        <location evidence="13">Cytoplasm</location>
    </subcellularLocation>
    <text evidence="13">Shifts from nucleus to cytoplasm as PIP5 levels increase. When in the nucleus, associated with chromatin. When cytoplasmic, mostly localized along the plasma membrane, associated with PIP5.</text>
</comment>
<comment type="subcellular location">
    <molecule>Isoform 3</molecule>
    <subcellularLocation>
        <location evidence="21">Cytoplasm</location>
    </subcellularLocation>
    <subcellularLocation>
        <location evidence="21">Cytoplasm</location>
        <location evidence="21">Perinuclear region</location>
    </subcellularLocation>
</comment>
<comment type="alternative products">
    <event type="alternative splicing"/>
    <isoform>
        <id>Q9C5X4-1</id>
        <name>1</name>
        <sequence type="displayed"/>
    </isoform>
    <isoform>
        <id>Q9C5X4-2</id>
        <name>2</name>
        <sequence type="described" ref="VSP_018132"/>
    </isoform>
    <isoform>
        <id>Q9C5X4-3</id>
        <name>3</name>
        <name evidence="33">SoloSET</name>
        <sequence type="described" ref="VSP_060526"/>
    </isoform>
</comment>
<comment type="tissue specificity">
    <molecule>Isoform 1</molecule>
    <text evidence="11 12 17 21">Strongly expressed in cotyledons, but weak levels in the first true leaves, except at the hydothodes (PubMed:21245040). Ubiquitous with higher levels in dividing tissues, including inflorescence meristem and flower primordia (PubMed:11418242, PubMed:12699618, PubMed:18375658). Expressed also in leaves (especially at hydathodes), in growing inflorescence stems and in the mature flowers (PubMed:18375658).</text>
</comment>
<comment type="tissue specificity">
    <molecule>Isoform 3</molecule>
    <text evidence="21">Strongly expressed in young seedlings.</text>
</comment>
<comment type="developmental stage">
    <molecule>Isoform 1</molecule>
    <text evidence="12 16 17 21">Expression is associated with the initiation of flower organs and ovules (PubMed:12699618, PubMed:18375658). Accumulates in the tissues of young seedlings but also in adult plants (PubMed:18375658, PubMed:21245040). In flowers, present in sepals, in the vasculature of petals, and in the filaments of the stamens and, at low levels, at the tips of the stigma (PubMed:18375658). In seedlings, observed in the vasculature of the cotyledons, hypocotyls, stems, and the first pair of leaves (PubMed:18375656, PubMed:21245040). Just prior to flowering, a strong reduction in expression levels occurs in the vasculature (PubMed:18375656).</text>
</comment>
<comment type="developmental stage">
    <molecule>Isoform 3</molecule>
    <text evidence="21">Expressed in young seedlings (PubMed:21245040). Later in development, confined to cells at attachment sites of organ to stems (PubMed:21245040).</text>
</comment>
<comment type="PTM">
    <text evidence="28">Activated via O-glycosylation by SEC; this modification triggers FLC locus H3K4me3 histone modification, thus preventing premature flowering.</text>
</comment>
<comment type="disruption phenotype">
    <molecule>Isoform 1</molecule>
    <text evidence="14 15 16 17 18 20 21 22 23 24 26 27">Decreased germination rates, larger stomatal apertures, more rapid transpiration and decreased tolerance to dehydration stress in atx1 plants partly due to reduced ABA biosynthesis as a result of decreased NCED3 transcript levels (PubMed:21309869). Reduced trimethylated 'Lys-4' histone H3 (H3K4me3) but normal dimethylated 'Lys-4' histone H3 (H3K4me2) at NAP, XTH33, NCED3, LTP and WRKY70 nucleosomes leading to decreased transcript levels in atx1 plants (PubMed:18375658, PubMed:21266657). Lower Pol II phosphorylation (e.g. Ser5P and Ser2P) and TBP (e.g. TBP1 and TBP2) occupancy at the promoters of NCED3, LTP and WRKY70 associated with reduced gene expression (PubMed:21266657). Strongly reduced occupancy of WDR5A at WRKY70 and LTP7 genes (PubMed:23284292). Accelerated transition from vegetative to reproductive development, under both long-day and short-day conditions, especially in medium-day conditions (12 hours light / 12 hours dark), due to FLC, FT and SOC1 epigenetic misregulation; specific depletion in H3K4me3 but increased H3K27me2 associated with reduced FLC, FT and SOC1 levels (PubMed:18375656, PubMed:21245040, PubMed:24102415). Misexpression of AGAMOUS, recognizable phenotypes (e.g. small and slightly serrated leaves, and early flowering time) and loss of H3K4me3 histone H3-tail marks (PubMed:17881378). Impaired in primary root growth with irregular shape and expanded quiescent center (QC) cells (PubMed:25205583). Ectopic expression of QC-specific markers (e.g. QC46, WOX5 and SCR) in the primary RAM and in the developing lateral root primordia (PubMed:25205583). Lack of coordination between cell division and cell growth leading to atypical distribution of T-divisions, the presence of oblique divisions, and abnormal cell patterning in the root apical meristem (RAM) (PubMed:25205583). Reduced lateral root (LR) density within the branching zone (PubMed:25205583). Altered transcription levels of target genes, including several endomembrane and cell wall-associated proteins coding genes, XTH genes being up-regulated (PubMed:18375658, PubMed:19154201). Derepression of XTH33 in roots, stems and seedlings (PubMed:19154201). Increased sensitivity to osmotic or dehydration stress due to an altered expression of genes involved in response to drought in both abscisic acid (ABA)-dependent and ABA-independent pathways (e.g. COR15A, ADH1, CBF4, RD29A, RD29B, RD26, ABF3, NCED3 and ABA3) (PubMed:19901554, PubMed:21309869). Double mutant plants atx1 clf exhibits normal leaf-phenotype and flowering time (PubMed:17881378). Reduced basal levels and induction of WRKY70 and of the salicylic acid (SA)-responsive gene PR1 upon pathogen infection by Pseudomonas syringae DC3000 or after SA treatment, but increased basal levels of the jasmonic acid (JA)-responsive gene THI2.1or after JA treatment (PubMed:17965588).</text>
</comment>
<comment type="disruption phenotype">
    <molecule>Isoform 3</molecule>
    <text evidence="21">Precocious flowering, asymmetric rosettes, aberrant flowers and chlorosis (PubMed:21245040). Dramatically different pattern of reduced actin bundles and absent actin transvacuolar cytoplasmic strands (TVSs) (PubMed:21245040).</text>
</comment>
<comment type="similarity">
    <text evidence="5">Belongs to the class V-like SAM-binding methyltransferase superfamily. Histone-lysine methyltransferase family. TRX/MLL subfamily.</text>
</comment>
<comment type="sequence caution" evidence="34">
    <conflict type="erroneous gene model prediction">
        <sequence resource="EMBL-CDS" id="AAD24842"/>
    </conflict>
</comment>
<name>ATX1_ARATH</name>
<reference key="1">
    <citation type="journal article" date="2001" name="Gene">
        <title>Two Arabidopsis homologs of the animal trithorax genes: a new structural domain is a signature feature of the trithorax gene family.</title>
        <authorList>
            <person name="Alvarez-Venegas R."/>
            <person name="Avramova Z."/>
        </authorList>
    </citation>
    <scope>NUCLEOTIDE SEQUENCE [MRNA] (ISOFORM 1)</scope>
    <scope>TISSUE SPECIFICITY</scope>
    <source>
        <strain>cv. Wassilewskija</strain>
    </source>
</reference>
<reference key="2">
    <citation type="journal article" date="1999" name="Nature">
        <title>Sequence and analysis of chromosome 2 of the plant Arabidopsis thaliana.</title>
        <authorList>
            <person name="Lin X."/>
            <person name="Kaul S."/>
            <person name="Rounsley S.D."/>
            <person name="Shea T.P."/>
            <person name="Benito M.-I."/>
            <person name="Town C.D."/>
            <person name="Fujii C.Y."/>
            <person name="Mason T.M."/>
            <person name="Bowman C.L."/>
            <person name="Barnstead M.E."/>
            <person name="Feldblyum T.V."/>
            <person name="Buell C.R."/>
            <person name="Ketchum K.A."/>
            <person name="Lee J.J."/>
            <person name="Ronning C.M."/>
            <person name="Koo H.L."/>
            <person name="Moffat K.S."/>
            <person name="Cronin L.A."/>
            <person name="Shen M."/>
            <person name="Pai G."/>
            <person name="Van Aken S."/>
            <person name="Umayam L."/>
            <person name="Tallon L.J."/>
            <person name="Gill J.E."/>
            <person name="Adams M.D."/>
            <person name="Carrera A.J."/>
            <person name="Creasy T.H."/>
            <person name="Goodman H.M."/>
            <person name="Somerville C.R."/>
            <person name="Copenhaver G.P."/>
            <person name="Preuss D."/>
            <person name="Nierman W.C."/>
            <person name="White O."/>
            <person name="Eisen J.A."/>
            <person name="Salzberg S.L."/>
            <person name="Fraser C.M."/>
            <person name="Venter J.C."/>
        </authorList>
    </citation>
    <scope>NUCLEOTIDE SEQUENCE [LARGE SCALE GENOMIC DNA]</scope>
    <source>
        <strain>cv. Columbia</strain>
    </source>
</reference>
<reference key="3">
    <citation type="journal article" date="2017" name="Plant J.">
        <title>Araport11: a complete reannotation of the Arabidopsis thaliana reference genome.</title>
        <authorList>
            <person name="Cheng C.Y."/>
            <person name="Krishnakumar V."/>
            <person name="Chan A.P."/>
            <person name="Thibaud-Nissen F."/>
            <person name="Schobel S."/>
            <person name="Town C.D."/>
        </authorList>
    </citation>
    <scope>GENOME REANNOTATION</scope>
    <source>
        <strain>cv. Columbia</strain>
    </source>
</reference>
<reference key="4">
    <citation type="journal article" date="2003" name="Science">
        <title>Empirical analysis of transcriptional activity in the Arabidopsis genome.</title>
        <authorList>
            <person name="Yamada K."/>
            <person name="Lim J."/>
            <person name="Dale J.M."/>
            <person name="Chen H."/>
            <person name="Shinn P."/>
            <person name="Palm C.J."/>
            <person name="Southwick A.M."/>
            <person name="Wu H.C."/>
            <person name="Kim C.J."/>
            <person name="Nguyen M."/>
            <person name="Pham P.K."/>
            <person name="Cheuk R.F."/>
            <person name="Karlin-Newmann G."/>
            <person name="Liu S.X."/>
            <person name="Lam B."/>
            <person name="Sakano H."/>
            <person name="Wu T."/>
            <person name="Yu G."/>
            <person name="Miranda M."/>
            <person name="Quach H.L."/>
            <person name="Tripp M."/>
            <person name="Chang C.H."/>
            <person name="Lee J.M."/>
            <person name="Toriumi M.J."/>
            <person name="Chan M.M."/>
            <person name="Tang C.C."/>
            <person name="Onodera C.S."/>
            <person name="Deng J.M."/>
            <person name="Akiyama K."/>
            <person name="Ansari Y."/>
            <person name="Arakawa T."/>
            <person name="Banh J."/>
            <person name="Banno F."/>
            <person name="Bowser L."/>
            <person name="Brooks S.Y."/>
            <person name="Carninci P."/>
            <person name="Chao Q."/>
            <person name="Choy N."/>
            <person name="Enju A."/>
            <person name="Goldsmith A.D."/>
            <person name="Gurjal M."/>
            <person name="Hansen N.F."/>
            <person name="Hayashizaki Y."/>
            <person name="Johnson-Hopson C."/>
            <person name="Hsuan V.W."/>
            <person name="Iida K."/>
            <person name="Karnes M."/>
            <person name="Khan S."/>
            <person name="Koesema E."/>
            <person name="Ishida J."/>
            <person name="Jiang P.X."/>
            <person name="Jones T."/>
            <person name="Kawai J."/>
            <person name="Kamiya A."/>
            <person name="Meyers C."/>
            <person name="Nakajima M."/>
            <person name="Narusaka M."/>
            <person name="Seki M."/>
            <person name="Sakurai T."/>
            <person name="Satou M."/>
            <person name="Tamse R."/>
            <person name="Vaysberg M."/>
            <person name="Wallender E.K."/>
            <person name="Wong C."/>
            <person name="Yamamura Y."/>
            <person name="Yuan S."/>
            <person name="Shinozaki K."/>
            <person name="Davis R.W."/>
            <person name="Theologis A."/>
            <person name="Ecker J.R."/>
        </authorList>
    </citation>
    <scope>NUCLEOTIDE SEQUENCE [LARGE SCALE MRNA] (ISOFORM 2)</scope>
    <source>
        <strain>cv. Columbia</strain>
    </source>
</reference>
<reference key="5">
    <citation type="journal article" date="2001" name="Nucleic Acids Res.">
        <title>The Arabidopsis thaliana genome contains at least 29 active genes encoding SET domain proteins that can be assigned to four evolutionarily conserved classes.</title>
        <authorList>
            <person name="Baumbusch L.O."/>
            <person name="Thorstensen T."/>
            <person name="Krauss V."/>
            <person name="Fischer A."/>
            <person name="Naumann K."/>
            <person name="Assalkhou R."/>
            <person name="Schulz I."/>
            <person name="Reuter G."/>
            <person name="Aalen R.B."/>
        </authorList>
    </citation>
    <scope>NOMENCLATURE</scope>
</reference>
<reference key="6">
    <citation type="journal article" date="2003" name="Curr. Biol.">
        <title>ATX-1, an Arabidopsis homolog of trithorax, activates flower homeotic genes.</title>
        <authorList>
            <person name="Alvarez-Venegas R."/>
            <person name="Pien S."/>
            <person name="Sadder M."/>
            <person name="Witmer X."/>
            <person name="Grossniklaus U."/>
            <person name="Avramova Z."/>
        </authorList>
    </citation>
    <scope>FUNCTION</scope>
    <scope>TISSUE SPECIFICITY</scope>
    <scope>DEVELOPMENTAL STAGE</scope>
</reference>
<reference key="7">
    <citation type="journal article" date="2006" name="Proc. Natl. Acad. Sci. U.S.A.">
        <title>The Arabidopsis homolog of trithorax, ATX1, binds phosphatidylinositol 5-phosphate, and the two regulate a common set of target genes.</title>
        <authorList>
            <person name="Alvarez-Vnegas R."/>
            <person name="Sadder M."/>
            <person name="Hlavacka A."/>
            <person name="Baluska F."/>
            <person name="Xia Y."/>
            <person name="Lu G."/>
            <person name="Firsov A."/>
            <person name="Sarath G."/>
            <person name="Moriyama H."/>
            <person name="Dubrovsky J.G."/>
            <person name="Avramova Z."/>
        </authorList>
    </citation>
    <scope>FUNCTION</scope>
    <scope>SUBCELLULAR LOCATION</scope>
    <scope>INTERACTION WITH PIP5</scope>
</reference>
<reference key="8">
    <citation type="journal article" date="2007" name="Epigenetics">
        <title>Epigenetic control of a transcription factor at the cross section of two antagonistic pathways.</title>
        <authorList>
            <person name="Alvarez-Venegas R."/>
            <person name="Abdallat A.A."/>
            <person name="Guo M."/>
            <person name="Alfano J.R."/>
            <person name="Avramova Z."/>
        </authorList>
    </citation>
    <scope>FUNCTION</scope>
    <scope>DISRUPTION PHENOTYPE</scope>
    <scope>CATALYTIC ACTIVITY</scope>
    <source>
        <strain>cv. Columbia</strain>
    </source>
</reference>
<reference key="9">
    <citation type="journal article" date="2007" name="Nucleic Acids Res.">
        <title>The Arabidopsis homologs of trithorax (ATX1) and enhancer of zeste (CLF) establish 'bivalent chromatin marks' at the silent AGAMOUS locus.</title>
        <authorList>
            <person name="Saleh A."/>
            <person name="Al-Abdallat A."/>
            <person name="Ndamukong I."/>
            <person name="Alvarez-Venegas R."/>
            <person name="Avramova Z."/>
        </authorList>
    </citation>
    <scope>FUNCTION</scope>
    <scope>DISRUPTION PHENOTYPE</scope>
    <scope>INTERACTION WITH CLF</scope>
    <scope>SUBCELLULAR LOCATION</scope>
    <source>
        <strain>cv. Wassilewskija</strain>
    </source>
</reference>
<reference key="10">
    <citation type="journal article" date="2008" name="Plant Cell">
        <title>The highly similar Arabidopsis homologs of trithorax ATX1 and ATX2 encode proteins with divergent biochemical functions.</title>
        <authorList>
            <person name="Saleh A."/>
            <person name="Alvarez-Venegas R."/>
            <person name="Yilmaz M."/>
            <person name="Le O."/>
            <person name="Hou G."/>
            <person name="Sadder M."/>
            <person name="Al-Abdallat A."/>
            <person name="Xia Y."/>
            <person name="Lu G."/>
            <person name="Ladunga I."/>
            <person name="Avramova Z."/>
        </authorList>
    </citation>
    <scope>FUNCTION</scope>
    <scope>DISRUPTION PHENOTYPE</scope>
    <scope>TISSUE SPECIFICITY</scope>
    <scope>DEVELOPMENTAL STAGE</scope>
    <scope>CATALYTIC ACTIVITY</scope>
    <source>
        <strain>cv. Columbia</strain>
    </source>
</reference>
<reference key="11">
    <citation type="journal article" date="2008" name="Plant Cell">
        <title>ARABIDOPSIS TRITHORAX1 dynamically regulates FLOWERING LOCUS C activation via histone 3 lysine 4 trimethylation.</title>
        <authorList>
            <person name="Pien S."/>
            <person name="Fleury D."/>
            <person name="Mylne J.S."/>
            <person name="Crevillen P."/>
            <person name="Inze D."/>
            <person name="Avramova Z."/>
            <person name="Dean C."/>
            <person name="Grossniklaus U."/>
        </authorList>
    </citation>
    <scope>FUNCTION</scope>
    <scope>DISRUPTION PHENOTYPE</scope>
    <scope>DEVELOPMENTAL STAGE</scope>
    <source>
        <strain>cv. Columbia</strain>
        <strain>cv. Wassilewskija</strain>
    </source>
</reference>
<reference key="12">
    <citation type="journal article" date="2009" name="Int. J. Dev. Biol.">
        <title>Evolution and pleiotropy of TRITHORAX function in Arabidopsis.</title>
        <authorList>
            <person name="Avramova Z."/>
        </authorList>
    </citation>
    <scope>REVIEW</scope>
</reference>
<reference key="13">
    <citation type="journal article" date="2009" name="Plant Cell">
        <title>Establishment of the winter-annual growth habit via FRIGIDA-mediated histone methylation at FLOWERING LOCUS C in Arabidopsis.</title>
        <authorList>
            <person name="Jiang D."/>
            <person name="Gu X."/>
            <person name="He Y."/>
        </authorList>
    </citation>
    <scope>INTERACTION WITH WDR5A</scope>
</reference>
<reference key="14">
    <citation type="journal article" date="2009" name="Plant J.">
        <title>Wall-modifying genes regulated by the Arabidopsis homolog of trithorax, ATX1: repression of the XTH33 gene as a test case.</title>
        <authorList>
            <person name="Ndamukong I."/>
            <person name="Chetram A."/>
            <person name="Saleh A."/>
            <person name="Avramova Z."/>
        </authorList>
    </citation>
    <scope>FUNCTION</scope>
    <scope>DISRUPTION PHENOTYPE</scope>
    <source>
        <strain>cv. Columbia</strain>
    </source>
</reference>
<reference key="15">
    <citation type="journal article" date="2009" name="Plant Signal. Behav.">
        <title>The Arabidopsis chromatin modifier ATX1, the myotubularin-like AtMTM and the response to drought.</title>
        <authorList>
            <person name="Ding Y."/>
            <person name="Lapko H."/>
            <person name="Ndamukong I."/>
            <person name="Xia Y."/>
            <person name="Al-Abdallat A."/>
            <person name="Lalithambika S."/>
            <person name="Sadder M."/>
            <person name="Saleh A."/>
            <person name="Fromm M."/>
            <person name="Riethoven J.-J."/>
            <person name="Lu G."/>
            <person name="Avramova Z."/>
        </authorList>
    </citation>
    <scope>FUNCTION</scope>
    <scope>DISRUPTION PHENOTYPE</scope>
    <source>
        <strain>cv. Columbia</strain>
    </source>
</reference>
<reference key="16">
    <citation type="journal article" date="2011" name="Nucleic Acids Res.">
        <title>A cytoplasm-specific activity encoded by the Trithorax-like ATX1 gene.</title>
        <authorList>
            <person name="Ndamukong I."/>
            <person name="Lapko H."/>
            <person name="Cerny R.L."/>
            <person name="Avramova Z."/>
        </authorList>
    </citation>
    <scope>PROTEIN SEQUENCE OF 876-883</scope>
    <scope>IDENTIFICATION BY MASS SPECTROMETRY</scope>
    <scope>FUNCTION</scope>
    <scope>DISRUPTION PHENOTYPE</scope>
    <scope>CATALYTIC ACTIVITY</scope>
    <scope>ISOFORMS 1 AND 3</scope>
    <scope>SUBCELLULAR LOCATION</scope>
    <scope>TISSUE SPECIFICITY</scope>
    <scope>DEVELOPMENTAL STAGE</scope>
    <scope>INTERACTION WITH A4/EF1A</scope>
    <source>
        <strain>cv. Wassilewskija-2</strain>
    </source>
</reference>
<reference key="17">
    <citation type="journal article" date="2011" name="Plant Cell">
        <title>Two distinct roles of ARABIDOPSIS HOMOLOG OF TRITHORAX1 (ATX1) at promoters and within transcribed regions of ATX1-regulated genes.</title>
        <authorList>
            <person name="Ding Y."/>
            <person name="Avramova Z."/>
            <person name="Fromm M."/>
        </authorList>
    </citation>
    <scope>FUNCTION</scope>
    <scope>DISRUPTION PHENOTYPE</scope>
    <scope>INTERACTION WITH NRPB1</scope>
    <scope>SUBUNIT</scope>
    <source>
        <strain>cv. Wassilewskija</strain>
    </source>
</reference>
<reference key="18">
    <citation type="journal article" date="2011" name="Plant J.">
        <title>The Arabidopsis trithorax-like factor ATX1 functions in dehydration stress responses via ABA-dependent and ABA-independent pathways.</title>
        <authorList>
            <person name="Ding Y."/>
            <person name="Avramova Z."/>
            <person name="Fromm M."/>
        </authorList>
    </citation>
    <scope>FUNCTION</scope>
    <scope>DISRUPTION PHENOTYPE</scope>
    <source>
        <strain>cv. Wassilewskija</strain>
    </source>
</reference>
<reference key="19">
    <citation type="journal article" date="2012" name="PLoS Genet.">
        <title>ATX1-generated H3K4me3 is required for efficient elongation of transcription, not initiation, at ATX1-regulated genes.</title>
        <authorList>
            <person name="Ding Y."/>
            <person name="Ndamukong I."/>
            <person name="Xu Z."/>
            <person name="Lapko H."/>
            <person name="Fromm M."/>
            <person name="Avramova Z."/>
        </authorList>
    </citation>
    <scope>FUNCTION</scope>
    <scope>DISRUPTION PHENOTYPE</scope>
    <scope>MUTAGENESIS OF TYR-927; TYR-945; TYR-954; TYR-1013 AND TYR-1015</scope>
    <scope>INTERACTION WITH WDR5A</scope>
    <source>
        <strain>cv. Wassilewskija</strain>
    </source>
</reference>
<reference key="20">
    <citation type="journal article" date="2013" name="Plant Physiol.">
        <title>EMBRYONIC FLOWER1 and ULTRAPETALA1 Act Antagonistically on Arabidopsis Development and Stress Response.</title>
        <authorList>
            <person name="Pu L."/>
            <person name="Liu M.-S."/>
            <person name="Kim S.Y."/>
            <person name="Chen L.-F.O."/>
            <person name="Fletcher J.C."/>
            <person name="Sung Z.R."/>
        </authorList>
    </citation>
    <scope>INTERACTION WITH ULT1</scope>
    <source>
        <strain>cv. Columbia</strain>
    </source>
</reference>
<reference key="21">
    <citation type="journal article" date="2014" name="Curr. Opin. Plant Biol.">
        <title>ATX1/AtCOMPASS and the H3K4me3 marks: how do they activate Arabidopsis genes?</title>
        <authorList>
            <person name="Fromm M."/>
            <person name="Avramova Z."/>
        </authorList>
    </citation>
    <scope>REVIEW</scope>
</reference>
<reference key="22">
    <citation type="journal article" date="2014" name="J. Exp. Bot.">
        <title>Arabidopsis homolog of trithorax1 (ATX1) is required for cell production, patterning, and morphogenesis in root development.</title>
        <authorList>
            <person name="Napsucialy-Mendivil S."/>
            <person name="Alvarez-Venegas R."/>
            <person name="Shishkova S."/>
            <person name="Dubrovsky J.G."/>
        </authorList>
    </citation>
    <scope>FUNCTION</scope>
    <scope>DISRUPTION PHENOTYPE</scope>
    <source>
        <strain>cv. Wassilewskija</strain>
    </source>
</reference>
<reference key="23">
    <citation type="journal article" date="2014" name="New Phytol.">
        <title>Combinatorial functions of diverse histone methylations in Arabidopsis thaliana flowering time regulation.</title>
        <authorList>
            <person name="Shafiq S."/>
            <person name="Berr A."/>
            <person name="Shen W.-H."/>
        </authorList>
    </citation>
    <scope>FUNCTION</scope>
    <scope>DISRUPTION PHENOTYPE</scope>
    <source>
        <strain>cv. Columbia</strain>
    </source>
</reference>
<reference key="24">
    <citation type="journal article" date="2018" name="EMBO J.">
        <title>Arabidopsis O-GlcNAc transferase SEC activates histone methyltransferase ATX1 to regulate flowering.</title>
        <authorList>
            <person name="Xing L."/>
            <person name="Liu Y."/>
            <person name="Xu S."/>
            <person name="Xiao J."/>
            <person name="Wang B."/>
            <person name="Deng H."/>
            <person name="Lu Z."/>
            <person name="Xu Y."/>
            <person name="Chong K."/>
        </authorList>
    </citation>
    <scope>FUNCTION</scope>
    <scope>GLYCOSYLATION AT SER-947</scope>
    <scope>INTERACTION WITH SEC</scope>
    <scope>MUTAGENESIS OF SER-947</scope>
    <source>
        <strain>cv. Columbia</strain>
    </source>
</reference>
<sequence length="1062" mass="119711">MACFSNETQIEIDVHDLVEAPIRYDSIESIYSIPSSALCCVNAVGSHSLMSKKVKAQKLPMIEQFEIEGSGVSASDDCCRSDDYKLRIQRPEIVRVYYRRRKRPLRECLLDQAVAVKTESVELDEIDCFEEKKRRKIGNCELVKSGMESIGLRRCKENNAFSGNKQNGSSRRKGSSSKNQDKATLASRSAKKWVRLSYDGVDPTSFIGLQCKVFWPLDALWYEGSIVGYSAERKRYTVKYRDGCDEDIVFDREMIKFLVSREEMELLHLKFCTSNVTVDGRDYDEMVVLAATLDECQDFEPGDIVWAKLAGHAMWPAVIVDESIIGERKGLNNKVSGGGSLLVQFFGTHDFARIKVKQAISFIKGLLSPSHLKCKQPRFEEGMQEAKMYLKAHRLPERMSQLQKGADSVDSDMANSTEEGNSGGDLLNDGEVWLRPTEHVDFRHIIGDLLIINLGKVVTDSQFFKDENHIWPEGYTAMRKFTSLTDHSASALYKMEVLRDAETKTHPLFIVTADSGEQFKGPTPSACWNKIYNRIKKVQNSDSPNILGEELNGSGTDMFGLSNPEVIKLVQDLSKSRPSSHVSMCKNSLGRHQNQPTGYRPVRVDWKDLDKCNVCHMDEEYENNLFLQCDKCRMMVHAKCYGELEPCDGALWLCNLCRPGAPDMPPRCCLCPVVGGAMKPTTDGRWAHLACAIWIPETCLSDVKKMEPIDGVNKVSKDRWKLMCTICGVSYGACIQCSNNSCRVAYHPLCARAAGLCVELENDMSVEGEEADQCIRMLSFCKRHRQTSTACLGSEDRIKSATHKTSEYLPPPNPSGCARTEPYNCFGRRGRKEPEALAAASSKRLFVENQPYVIGGYSRLEFSTYKSIHGSKVSQMNTPSNILSMAEKYRYMRETYRKRLAFGKSGIHGFGIFAKLPHRAGDMMIEYTGELVRPSIADKREQLIYNSMVGAGTYMFRIDDERVIDATRTGSIAHLINHSCVPNCYSRVITVNGDEHIIIFAKRHIPKWEELTYDYRFFSIGERLSCSCGFPGCRGVVNDTEAEEQHAKICVPRCDLIDWTAE</sequence>